<proteinExistence type="inferred from homology"/>
<organism>
    <name type="scientific">Stenotrophomonas maltophilia (strain R551-3)</name>
    <dbReference type="NCBI Taxonomy" id="391008"/>
    <lineage>
        <taxon>Bacteria</taxon>
        <taxon>Pseudomonadati</taxon>
        <taxon>Pseudomonadota</taxon>
        <taxon>Gammaproteobacteria</taxon>
        <taxon>Lysobacterales</taxon>
        <taxon>Lysobacteraceae</taxon>
        <taxon>Stenotrophomonas</taxon>
        <taxon>Stenotrophomonas maltophilia group</taxon>
    </lineage>
</organism>
<comment type="function">
    <text evidence="1">Catalyzes the NADPH-dependent reduction of glutamyl-tRNA(Glu) to glutamate 1-semialdehyde (GSA).</text>
</comment>
<comment type="catalytic activity">
    <reaction evidence="1">
        <text>(S)-4-amino-5-oxopentanoate + tRNA(Glu) + NADP(+) = L-glutamyl-tRNA(Glu) + NADPH + H(+)</text>
        <dbReference type="Rhea" id="RHEA:12344"/>
        <dbReference type="Rhea" id="RHEA-COMP:9663"/>
        <dbReference type="Rhea" id="RHEA-COMP:9680"/>
        <dbReference type="ChEBI" id="CHEBI:15378"/>
        <dbReference type="ChEBI" id="CHEBI:57501"/>
        <dbReference type="ChEBI" id="CHEBI:57783"/>
        <dbReference type="ChEBI" id="CHEBI:58349"/>
        <dbReference type="ChEBI" id="CHEBI:78442"/>
        <dbReference type="ChEBI" id="CHEBI:78520"/>
        <dbReference type="EC" id="1.2.1.70"/>
    </reaction>
</comment>
<comment type="pathway">
    <text evidence="1">Porphyrin-containing compound metabolism; protoporphyrin-IX biosynthesis; 5-aminolevulinate from L-glutamyl-tRNA(Glu): step 1/2.</text>
</comment>
<comment type="subunit">
    <text evidence="1">Homodimer.</text>
</comment>
<comment type="domain">
    <text evidence="1">Possesses an unusual extended V-shaped dimeric structure with each monomer consisting of three distinct domains arranged along a curved 'spinal' alpha-helix. The N-terminal catalytic domain specifically recognizes the glutamate moiety of the substrate. The second domain is the NADPH-binding domain, and the third C-terminal domain is responsible for dimerization.</text>
</comment>
<comment type="miscellaneous">
    <text evidence="1">During catalysis, the active site Cys acts as a nucleophile attacking the alpha-carbonyl group of tRNA-bound glutamate with the formation of a thioester intermediate between enzyme and glutamate, and the concomitant release of tRNA(Glu). The thioester intermediate is finally reduced by direct hydride transfer from NADPH, to form the product GSA.</text>
</comment>
<comment type="similarity">
    <text evidence="1">Belongs to the glutamyl-tRNA reductase family.</text>
</comment>
<sequence length="427" mass="46629">MTLWVLGLNHQTAPVELRERAAFAGEALPRALGSLRDTPQIAEAVLLSTCNRTELYAVADSAQALDQWLHTQAGDLQGYLYQHADAEAVRHLFRVATGLDSMVLGEPQILGQVKDAWSTARDHGLLGQRLDRLFQQTFSVAKRARTDTQVGANPVSVASAAVRLAQNAFARLDDSTVLLVGAGETIELAARHLSEGKVRRLLIANRTLAHAQELASRHGGVALPLTELDRHLGEADVVFSATAAREPVIHREMVAKALRTRRHKPMLLFDLAVPRDIEADVATLNDAFLYTVDDLERAVEDNRRGRREAAAEAEAIIDLQVSRFVETQQASAHQAPLRQLRAFGEATRTELLERARQQLANGKPADEVLELLAHGLTNRLLHPPTAALRAAALSGDADLTRAAERLFPATPGYRHPPVRPDDADPAP</sequence>
<evidence type="ECO:0000255" key="1">
    <source>
        <dbReference type="HAMAP-Rule" id="MF_00087"/>
    </source>
</evidence>
<evidence type="ECO:0000256" key="2">
    <source>
        <dbReference type="SAM" id="MobiDB-lite"/>
    </source>
</evidence>
<keyword id="KW-0521">NADP</keyword>
<keyword id="KW-0560">Oxidoreductase</keyword>
<keyword id="KW-0627">Porphyrin biosynthesis</keyword>
<protein>
    <recommendedName>
        <fullName evidence="1">Glutamyl-tRNA reductase</fullName>
        <shortName evidence="1">GluTR</shortName>
        <ecNumber evidence="1">1.2.1.70</ecNumber>
    </recommendedName>
</protein>
<feature type="chain" id="PRO_1000093171" description="Glutamyl-tRNA reductase">
    <location>
        <begin position="1"/>
        <end position="427"/>
    </location>
</feature>
<feature type="region of interest" description="Disordered" evidence="2">
    <location>
        <begin position="407"/>
        <end position="427"/>
    </location>
</feature>
<feature type="compositionally biased region" description="Basic and acidic residues" evidence="2">
    <location>
        <begin position="418"/>
        <end position="427"/>
    </location>
</feature>
<feature type="active site" description="Nucleophile" evidence="1">
    <location>
        <position position="50"/>
    </location>
</feature>
<feature type="binding site" evidence="1">
    <location>
        <begin position="49"/>
        <end position="52"/>
    </location>
    <ligand>
        <name>substrate</name>
    </ligand>
</feature>
<feature type="binding site" evidence="1">
    <location>
        <position position="101"/>
    </location>
    <ligand>
        <name>substrate</name>
    </ligand>
</feature>
<feature type="binding site" evidence="1">
    <location>
        <begin position="106"/>
        <end position="108"/>
    </location>
    <ligand>
        <name>substrate</name>
    </ligand>
</feature>
<feature type="binding site" evidence="1">
    <location>
        <position position="112"/>
    </location>
    <ligand>
        <name>substrate</name>
    </ligand>
</feature>
<feature type="binding site" evidence="1">
    <location>
        <begin position="181"/>
        <end position="186"/>
    </location>
    <ligand>
        <name>NADP(+)</name>
        <dbReference type="ChEBI" id="CHEBI:58349"/>
    </ligand>
</feature>
<feature type="site" description="Important for activity" evidence="1">
    <location>
        <position position="91"/>
    </location>
</feature>
<gene>
    <name evidence="1" type="primary">hemA</name>
    <name type="ordered locus">Smal_0722</name>
</gene>
<accession>B4SKS9</accession>
<dbReference type="EC" id="1.2.1.70" evidence="1"/>
<dbReference type="EMBL" id="CP001111">
    <property type="protein sequence ID" value="ACF50427.1"/>
    <property type="molecule type" value="Genomic_DNA"/>
</dbReference>
<dbReference type="RefSeq" id="WP_012510140.1">
    <property type="nucleotide sequence ID" value="NC_011071.1"/>
</dbReference>
<dbReference type="SMR" id="B4SKS9"/>
<dbReference type="STRING" id="391008.Smal_0722"/>
<dbReference type="KEGG" id="smt:Smal_0722"/>
<dbReference type="eggNOG" id="COG0373">
    <property type="taxonomic scope" value="Bacteria"/>
</dbReference>
<dbReference type="HOGENOM" id="CLU_035113_2_2_6"/>
<dbReference type="OrthoDB" id="110209at2"/>
<dbReference type="UniPathway" id="UPA00251">
    <property type="reaction ID" value="UER00316"/>
</dbReference>
<dbReference type="Proteomes" id="UP000001867">
    <property type="component" value="Chromosome"/>
</dbReference>
<dbReference type="GO" id="GO:0008883">
    <property type="term" value="F:glutamyl-tRNA reductase activity"/>
    <property type="evidence" value="ECO:0007669"/>
    <property type="project" value="UniProtKB-UniRule"/>
</dbReference>
<dbReference type="GO" id="GO:0050661">
    <property type="term" value="F:NADP binding"/>
    <property type="evidence" value="ECO:0007669"/>
    <property type="project" value="InterPro"/>
</dbReference>
<dbReference type="GO" id="GO:0019353">
    <property type="term" value="P:protoporphyrinogen IX biosynthetic process from glutamate"/>
    <property type="evidence" value="ECO:0007669"/>
    <property type="project" value="TreeGrafter"/>
</dbReference>
<dbReference type="CDD" id="cd05213">
    <property type="entry name" value="NAD_bind_Glutamyl_tRNA_reduct"/>
    <property type="match status" value="1"/>
</dbReference>
<dbReference type="FunFam" id="3.30.460.30:FF:000001">
    <property type="entry name" value="Glutamyl-tRNA reductase"/>
    <property type="match status" value="1"/>
</dbReference>
<dbReference type="FunFam" id="3.40.50.720:FF:000031">
    <property type="entry name" value="Glutamyl-tRNA reductase"/>
    <property type="match status" value="1"/>
</dbReference>
<dbReference type="Gene3D" id="3.30.460.30">
    <property type="entry name" value="Glutamyl-tRNA reductase, N-terminal domain"/>
    <property type="match status" value="1"/>
</dbReference>
<dbReference type="Gene3D" id="3.40.50.720">
    <property type="entry name" value="NAD(P)-binding Rossmann-like Domain"/>
    <property type="match status" value="1"/>
</dbReference>
<dbReference type="HAMAP" id="MF_00087">
    <property type="entry name" value="Glu_tRNA_reductase"/>
    <property type="match status" value="1"/>
</dbReference>
<dbReference type="InterPro" id="IPR000343">
    <property type="entry name" value="4pyrrol_synth_GluRdtase"/>
</dbReference>
<dbReference type="InterPro" id="IPR015896">
    <property type="entry name" value="4pyrrol_synth_GluRdtase_dimer"/>
</dbReference>
<dbReference type="InterPro" id="IPR015895">
    <property type="entry name" value="4pyrrol_synth_GluRdtase_N"/>
</dbReference>
<dbReference type="InterPro" id="IPR018214">
    <property type="entry name" value="GluRdtase_CS"/>
</dbReference>
<dbReference type="InterPro" id="IPR036453">
    <property type="entry name" value="GluRdtase_dimer_dom_sf"/>
</dbReference>
<dbReference type="InterPro" id="IPR036343">
    <property type="entry name" value="GluRdtase_N_sf"/>
</dbReference>
<dbReference type="InterPro" id="IPR036291">
    <property type="entry name" value="NAD(P)-bd_dom_sf"/>
</dbReference>
<dbReference type="InterPro" id="IPR006151">
    <property type="entry name" value="Shikm_DH/Glu-tRNA_Rdtase"/>
</dbReference>
<dbReference type="NCBIfam" id="TIGR01035">
    <property type="entry name" value="hemA"/>
    <property type="match status" value="1"/>
</dbReference>
<dbReference type="PANTHER" id="PTHR43013">
    <property type="entry name" value="GLUTAMYL-TRNA REDUCTASE"/>
    <property type="match status" value="1"/>
</dbReference>
<dbReference type="PANTHER" id="PTHR43013:SF1">
    <property type="entry name" value="GLUTAMYL-TRNA REDUCTASE"/>
    <property type="match status" value="1"/>
</dbReference>
<dbReference type="Pfam" id="PF00745">
    <property type="entry name" value="GlutR_dimer"/>
    <property type="match status" value="1"/>
</dbReference>
<dbReference type="Pfam" id="PF05201">
    <property type="entry name" value="GlutR_N"/>
    <property type="match status" value="1"/>
</dbReference>
<dbReference type="Pfam" id="PF01488">
    <property type="entry name" value="Shikimate_DH"/>
    <property type="match status" value="1"/>
</dbReference>
<dbReference type="PIRSF" id="PIRSF000445">
    <property type="entry name" value="4pyrrol_synth_GluRdtase"/>
    <property type="match status" value="1"/>
</dbReference>
<dbReference type="SUPFAM" id="SSF69742">
    <property type="entry name" value="Glutamyl tRNA-reductase catalytic, N-terminal domain"/>
    <property type="match status" value="1"/>
</dbReference>
<dbReference type="SUPFAM" id="SSF69075">
    <property type="entry name" value="Glutamyl tRNA-reductase dimerization domain"/>
    <property type="match status" value="1"/>
</dbReference>
<dbReference type="SUPFAM" id="SSF51735">
    <property type="entry name" value="NAD(P)-binding Rossmann-fold domains"/>
    <property type="match status" value="1"/>
</dbReference>
<dbReference type="PROSITE" id="PS00747">
    <property type="entry name" value="GLUTR"/>
    <property type="match status" value="1"/>
</dbReference>
<name>HEM1_STRM5</name>
<reference key="1">
    <citation type="submission" date="2008-06" db="EMBL/GenBank/DDBJ databases">
        <title>Complete sequence of Stenotrophomonas maltophilia R551-3.</title>
        <authorList>
            <consortium name="US DOE Joint Genome Institute"/>
            <person name="Lucas S."/>
            <person name="Copeland A."/>
            <person name="Lapidus A."/>
            <person name="Glavina del Rio T."/>
            <person name="Dalin E."/>
            <person name="Tice H."/>
            <person name="Pitluck S."/>
            <person name="Chain P."/>
            <person name="Malfatti S."/>
            <person name="Shin M."/>
            <person name="Vergez L."/>
            <person name="Lang D."/>
            <person name="Schmutz J."/>
            <person name="Larimer F."/>
            <person name="Land M."/>
            <person name="Hauser L."/>
            <person name="Kyrpides N."/>
            <person name="Mikhailova N."/>
            <person name="Taghavi S."/>
            <person name="Monchy S."/>
            <person name="Newman L."/>
            <person name="Vangronsveld J."/>
            <person name="van der Lelie D."/>
            <person name="Richardson P."/>
        </authorList>
    </citation>
    <scope>NUCLEOTIDE SEQUENCE [LARGE SCALE GENOMIC DNA]</scope>
    <source>
        <strain>R551-3</strain>
    </source>
</reference>